<name>MED10_PICST</name>
<reference key="1">
    <citation type="journal article" date="2007" name="Nat. Biotechnol.">
        <title>Genome sequence of the lignocellulose-bioconverting and xylose-fermenting yeast Pichia stipitis.</title>
        <authorList>
            <person name="Jeffries T.W."/>
            <person name="Grigoriev I.V."/>
            <person name="Grimwood J."/>
            <person name="Laplaza J.M."/>
            <person name="Aerts A."/>
            <person name="Salamov A."/>
            <person name="Schmutz J."/>
            <person name="Lindquist E."/>
            <person name="Dehal P."/>
            <person name="Shapiro H."/>
            <person name="Jin Y.-S."/>
            <person name="Passoth V."/>
            <person name="Richardson P.M."/>
        </authorList>
    </citation>
    <scope>NUCLEOTIDE SEQUENCE [LARGE SCALE GENOMIC DNA]</scope>
    <source>
        <strain>ATCC 58785 / CBS 6054 / NBRC 10063 / NRRL Y-11545</strain>
    </source>
</reference>
<dbReference type="EMBL" id="CP000496">
    <property type="protein sequence ID" value="ABN65083.2"/>
    <property type="molecule type" value="Genomic_DNA"/>
</dbReference>
<dbReference type="RefSeq" id="XP_001383112.2">
    <property type="nucleotide sequence ID" value="XM_001383075.1"/>
</dbReference>
<dbReference type="SMR" id="A3LPQ8"/>
<dbReference type="FunCoup" id="A3LPQ8">
    <property type="interactions" value="589"/>
</dbReference>
<dbReference type="STRING" id="322104.A3LPQ8"/>
<dbReference type="GeneID" id="4836673"/>
<dbReference type="KEGG" id="pic:PICST_30038"/>
<dbReference type="eggNOG" id="KOG3046">
    <property type="taxonomic scope" value="Eukaryota"/>
</dbReference>
<dbReference type="HOGENOM" id="CLU_096169_1_0_1"/>
<dbReference type="InParanoid" id="A3LPQ8"/>
<dbReference type="OMA" id="QYQRAKM"/>
<dbReference type="OrthoDB" id="337270at2759"/>
<dbReference type="Proteomes" id="UP000002258">
    <property type="component" value="Chromosome 2"/>
</dbReference>
<dbReference type="GO" id="GO:0016592">
    <property type="term" value="C:mediator complex"/>
    <property type="evidence" value="ECO:0007669"/>
    <property type="project" value="InterPro"/>
</dbReference>
<dbReference type="GO" id="GO:0003712">
    <property type="term" value="F:transcription coregulator activity"/>
    <property type="evidence" value="ECO:0007669"/>
    <property type="project" value="InterPro"/>
</dbReference>
<dbReference type="GO" id="GO:0006357">
    <property type="term" value="P:regulation of transcription by RNA polymerase II"/>
    <property type="evidence" value="ECO:0007669"/>
    <property type="project" value="InterPro"/>
</dbReference>
<dbReference type="InterPro" id="IPR019145">
    <property type="entry name" value="Mediator_Med10"/>
</dbReference>
<dbReference type="Pfam" id="PF09748">
    <property type="entry name" value="Med10"/>
    <property type="match status" value="1"/>
</dbReference>
<accession>A3LPQ8</accession>
<proteinExistence type="inferred from homology"/>
<sequence length="146" mass="16324">MTTSTIEQKDENEPLLATADQVSALIESFIELGVLVHDNQGTQQSHTALTHKTNQVISQLSGLTSSPFTHQFPIPVDVISYIEDGRNPDIYTREFIEVTAKSNARLKGKMKAFARLRDVLGEKLGNEFPRLVDSIDDIKKRTTPEE</sequence>
<protein>
    <recommendedName>
        <fullName>Mediator of RNA polymerase II transcription subunit 10</fullName>
    </recommendedName>
    <alternativeName>
        <fullName>Mediator complex subunit 10</fullName>
    </alternativeName>
</protein>
<gene>
    <name type="primary">NUT2</name>
    <name type="synonym">MED10</name>
    <name type="ORF">PICST_30038</name>
</gene>
<feature type="chain" id="PRO_0000303176" description="Mediator of RNA polymerase II transcription subunit 10">
    <location>
        <begin position="1"/>
        <end position="146"/>
    </location>
</feature>
<evidence type="ECO:0000250" key="1"/>
<evidence type="ECO:0000305" key="2"/>
<comment type="function">
    <text evidence="1">Component of the Mediator complex, a coactivator involved in the regulated transcription of nearly all RNA polymerase II-dependent genes. Mediator functions as a bridge to convey information from gene-specific regulatory proteins to the basal RNA polymerase II transcription machinery. Mediator is recruited to promoters by direct interactions with regulatory proteins and serves as a scaffold for the assembly of a functional preinitiation complex with RNA polymerase II and the general transcription factors (By similarity).</text>
</comment>
<comment type="subunit">
    <text evidence="1">Component of the Mediator complex.</text>
</comment>
<comment type="subcellular location">
    <subcellularLocation>
        <location evidence="1">Nucleus</location>
    </subcellularLocation>
</comment>
<comment type="similarity">
    <text evidence="2">Belongs to the Mediator complex subunit 10 family.</text>
</comment>
<organism>
    <name type="scientific">Scheffersomyces stipitis (strain ATCC 58785 / CBS 6054 / NBRC 10063 / NRRL Y-11545)</name>
    <name type="common">Yeast</name>
    <name type="synonym">Pichia stipitis</name>
    <dbReference type="NCBI Taxonomy" id="322104"/>
    <lineage>
        <taxon>Eukaryota</taxon>
        <taxon>Fungi</taxon>
        <taxon>Dikarya</taxon>
        <taxon>Ascomycota</taxon>
        <taxon>Saccharomycotina</taxon>
        <taxon>Pichiomycetes</taxon>
        <taxon>Debaryomycetaceae</taxon>
        <taxon>Scheffersomyces</taxon>
    </lineage>
</organism>
<keyword id="KW-0010">Activator</keyword>
<keyword id="KW-0539">Nucleus</keyword>
<keyword id="KW-1185">Reference proteome</keyword>
<keyword id="KW-0804">Transcription</keyword>
<keyword id="KW-0805">Transcription regulation</keyword>